<name>CRH12_ARTBC</name>
<gene>
    <name type="ORF">ARB_03382</name>
</gene>
<accession>D4B4J2</accession>
<sequence>MMASRRISVLSSLGLFACLLSPVVAQTFTYCNPLEKDDCPNAPALGQNYTTYLNSSLNPDVWNATSGLVEISDAGSNFTIHKALDSPTIQSFFYIFFGTVEVHMKAATGRGVVSSIVIQSEVLDEIDWEWVGSEPDKVQTNYFGKGNTTSYDRGKTFDIKGAMDDFHNYTVNWTPEKIEWYIDTVLVRTLKYEEALGGKNFPQTPSTVRLGIWPGGDPQNKKGVIEWAGGEIDYEKTPYIMSVKELKVVDAHKGKEYSYSDRSGDWQSIKVIDGVSDIANEINKPPPKSLAQRWRELPTAAKIAIFASIGGLVILGMAIIAFCCVKQRRAGRREFSMENSKFVEDQNNVMAMRTQWNHKYKPVGS</sequence>
<feature type="signal peptide" evidence="4">
    <location>
        <begin position="1"/>
        <end position="25"/>
    </location>
</feature>
<feature type="chain" id="PRO_0000434919" description="Crh-like protein ARB_03382">
    <location>
        <begin position="26"/>
        <end position="365"/>
    </location>
</feature>
<feature type="topological domain" description="Extracellular" evidence="7">
    <location>
        <begin position="26"/>
        <end position="302"/>
    </location>
</feature>
<feature type="transmembrane region" description="Helical" evidence="4">
    <location>
        <begin position="303"/>
        <end position="323"/>
    </location>
</feature>
<feature type="topological domain" description="Cytoplasmic" evidence="7">
    <location>
        <begin position="324"/>
        <end position="365"/>
    </location>
</feature>
<feature type="domain" description="GH16" evidence="6">
    <location>
        <begin position="50"/>
        <end position="243"/>
    </location>
</feature>
<feature type="active site" description="Nucleophile" evidence="1">
    <location>
        <position position="125"/>
    </location>
</feature>
<feature type="active site" description="Proton donor" evidence="1">
    <location>
        <position position="129"/>
    </location>
</feature>
<feature type="binding site" evidence="3">
    <location>
        <position position="129"/>
    </location>
    <ligand>
        <name>chitin</name>
        <dbReference type="ChEBI" id="CHEBI:17029"/>
    </ligand>
</feature>
<feature type="binding site" evidence="3">
    <location>
        <position position="209"/>
    </location>
    <ligand>
        <name>chitin</name>
        <dbReference type="ChEBI" id="CHEBI:17029"/>
    </ligand>
</feature>
<feature type="binding site" evidence="3">
    <location>
        <position position="213"/>
    </location>
    <ligand>
        <name>chitin</name>
        <dbReference type="ChEBI" id="CHEBI:17029"/>
    </ligand>
</feature>
<feature type="glycosylation site" description="N-linked (GlcNAc...) asparagine" evidence="5">
    <location>
        <position position="48"/>
    </location>
</feature>
<feature type="glycosylation site" description="N-linked (GlcNAc...) asparagine" evidence="5">
    <location>
        <position position="54"/>
    </location>
</feature>
<feature type="glycosylation site" description="N-linked (GlcNAc...) asparagine" evidence="5">
    <location>
        <position position="63"/>
    </location>
</feature>
<feature type="glycosylation site" description="N-linked (GlcNAc...) asparagine" evidence="5">
    <location>
        <position position="77"/>
    </location>
</feature>
<feature type="glycosylation site" description="N-linked (GlcNAc...) asparagine" evidence="5">
    <location>
        <position position="147"/>
    </location>
</feature>
<feature type="glycosylation site" description="N-linked (GlcNAc...) asparagine" evidence="5">
    <location>
        <position position="168"/>
    </location>
</feature>
<feature type="disulfide bond" evidence="3">
    <location>
        <begin position="31"/>
        <end position="39"/>
    </location>
</feature>
<proteinExistence type="inferred from homology"/>
<keyword id="KW-0020">Allergen</keyword>
<keyword id="KW-0961">Cell wall biogenesis/degradation</keyword>
<keyword id="KW-1015">Disulfide bond</keyword>
<keyword id="KW-0325">Glycoprotein</keyword>
<keyword id="KW-0326">Glycosidase</keyword>
<keyword id="KW-0328">Glycosyltransferase</keyword>
<keyword id="KW-0378">Hydrolase</keyword>
<keyword id="KW-0472">Membrane</keyword>
<keyword id="KW-1185">Reference proteome</keyword>
<keyword id="KW-0732">Signal</keyword>
<keyword id="KW-0808">Transferase</keyword>
<keyword id="KW-0812">Transmembrane</keyword>
<keyword id="KW-1133">Transmembrane helix</keyword>
<organism>
    <name type="scientific">Arthroderma benhamiae (strain ATCC MYA-4681 / CBS 112371)</name>
    <name type="common">Trichophyton mentagrophytes</name>
    <dbReference type="NCBI Taxonomy" id="663331"/>
    <lineage>
        <taxon>Eukaryota</taxon>
        <taxon>Fungi</taxon>
        <taxon>Dikarya</taxon>
        <taxon>Ascomycota</taxon>
        <taxon>Pezizomycotina</taxon>
        <taxon>Eurotiomycetes</taxon>
        <taxon>Eurotiomycetidae</taxon>
        <taxon>Onygenales</taxon>
        <taxon>Arthrodermataceae</taxon>
        <taxon>Trichophyton</taxon>
    </lineage>
</organism>
<reference key="1">
    <citation type="journal article" date="2011" name="Genome Biol.">
        <title>Comparative and functional genomics provide insights into the pathogenicity of dermatophytic fungi.</title>
        <authorList>
            <person name="Burmester A."/>
            <person name="Shelest E."/>
            <person name="Gloeckner G."/>
            <person name="Heddergott C."/>
            <person name="Schindler S."/>
            <person name="Staib P."/>
            <person name="Heidel A."/>
            <person name="Felder M."/>
            <person name="Petzold A."/>
            <person name="Szafranski K."/>
            <person name="Feuermann M."/>
            <person name="Pedruzzi I."/>
            <person name="Priebe S."/>
            <person name="Groth M."/>
            <person name="Winkler R."/>
            <person name="Li W."/>
            <person name="Kniemeyer O."/>
            <person name="Schroeckh V."/>
            <person name="Hertweck C."/>
            <person name="Hube B."/>
            <person name="White T.C."/>
            <person name="Platzer M."/>
            <person name="Guthke R."/>
            <person name="Heitman J."/>
            <person name="Woestemeyer J."/>
            <person name="Zipfel P.F."/>
            <person name="Monod M."/>
            <person name="Brakhage A.A."/>
        </authorList>
    </citation>
    <scope>NUCLEOTIDE SEQUENCE [LARGE SCALE GENOMIC DNA]</scope>
    <source>
        <strain>ATCC MYA-4681 / CBS 112371</strain>
    </source>
</reference>
<protein>
    <recommendedName>
        <fullName evidence="3">Crh-like protein ARB_03382</fullName>
    </recommendedName>
    <alternativeName>
        <fullName evidence="7">Allergen Asp f 9 homolog</fullName>
    </alternativeName>
    <domain>
        <recommendedName>
            <fullName evidence="3">Chitinase ARB_03382</fullName>
            <ecNumber evidence="3">3.2.1.14</ecNumber>
        </recommendedName>
    </domain>
    <domain>
        <recommendedName>
            <fullName evidence="3">Chitin transglycosylase ARB_03382</fullName>
            <ecNumber evidence="3">2.4.-.-</ecNumber>
        </recommendedName>
    </domain>
</protein>
<dbReference type="EC" id="3.2.1.14" evidence="3"/>
<dbReference type="EC" id="2.4.-.-" evidence="3"/>
<dbReference type="EMBL" id="ABSU01000034">
    <property type="protein sequence ID" value="EFE30040.1"/>
    <property type="status" value="ALT_SEQ"/>
    <property type="molecule type" value="Genomic_DNA"/>
</dbReference>
<dbReference type="RefSeq" id="XP_003010680.1">
    <property type="nucleotide sequence ID" value="XM_003010634.1"/>
</dbReference>
<dbReference type="SMR" id="D4B4J2"/>
<dbReference type="GeneID" id="9524793"/>
<dbReference type="KEGG" id="abe:ARB_03382"/>
<dbReference type="eggNOG" id="ENOG502QVQI">
    <property type="taxonomic scope" value="Eukaryota"/>
</dbReference>
<dbReference type="HOGENOM" id="CLU_027506_1_1_1"/>
<dbReference type="OrthoDB" id="4781at2759"/>
<dbReference type="Proteomes" id="UP000008866">
    <property type="component" value="Unassembled WGS sequence"/>
</dbReference>
<dbReference type="GO" id="GO:0009277">
    <property type="term" value="C:fungal-type cell wall"/>
    <property type="evidence" value="ECO:0007669"/>
    <property type="project" value="TreeGrafter"/>
</dbReference>
<dbReference type="GO" id="GO:0016020">
    <property type="term" value="C:membrane"/>
    <property type="evidence" value="ECO:0007669"/>
    <property type="project" value="UniProtKB-SubCell"/>
</dbReference>
<dbReference type="GO" id="GO:0016757">
    <property type="term" value="F:glycosyltransferase activity"/>
    <property type="evidence" value="ECO:0007669"/>
    <property type="project" value="TreeGrafter"/>
</dbReference>
<dbReference type="GO" id="GO:0004553">
    <property type="term" value="F:hydrolase activity, hydrolyzing O-glycosyl compounds"/>
    <property type="evidence" value="ECO:0007669"/>
    <property type="project" value="InterPro"/>
</dbReference>
<dbReference type="GO" id="GO:0005975">
    <property type="term" value="P:carbohydrate metabolic process"/>
    <property type="evidence" value="ECO:0007669"/>
    <property type="project" value="InterPro"/>
</dbReference>
<dbReference type="GO" id="GO:0031505">
    <property type="term" value="P:fungal-type cell wall organization"/>
    <property type="evidence" value="ECO:0007669"/>
    <property type="project" value="TreeGrafter"/>
</dbReference>
<dbReference type="CDD" id="cd02183">
    <property type="entry name" value="GH16_fungal_CRH1_transglycosylase"/>
    <property type="match status" value="1"/>
</dbReference>
<dbReference type="Gene3D" id="2.60.120.200">
    <property type="match status" value="1"/>
</dbReference>
<dbReference type="InterPro" id="IPR013320">
    <property type="entry name" value="ConA-like_dom_sf"/>
</dbReference>
<dbReference type="InterPro" id="IPR000757">
    <property type="entry name" value="GH16"/>
</dbReference>
<dbReference type="InterPro" id="IPR050546">
    <property type="entry name" value="Glycosyl_Hydrlase_16"/>
</dbReference>
<dbReference type="PANTHER" id="PTHR10963:SF27">
    <property type="entry name" value="GLYCOSIDASE-RELATED"/>
    <property type="match status" value="1"/>
</dbReference>
<dbReference type="PANTHER" id="PTHR10963">
    <property type="entry name" value="GLYCOSYL HYDROLASE-RELATED"/>
    <property type="match status" value="1"/>
</dbReference>
<dbReference type="Pfam" id="PF00722">
    <property type="entry name" value="Glyco_hydro_16"/>
    <property type="match status" value="1"/>
</dbReference>
<dbReference type="SUPFAM" id="SSF49899">
    <property type="entry name" value="Concanavalin A-like lectins/glucanases"/>
    <property type="match status" value="1"/>
</dbReference>
<dbReference type="PROSITE" id="PS51762">
    <property type="entry name" value="GH16_2"/>
    <property type="match status" value="1"/>
</dbReference>
<evidence type="ECO:0000250" key="1">
    <source>
        <dbReference type="UniProtKB" id="P27051"/>
    </source>
</evidence>
<evidence type="ECO:0000250" key="2">
    <source>
        <dbReference type="UniProtKB" id="Q5AFA2"/>
    </source>
</evidence>
<evidence type="ECO:0000250" key="3">
    <source>
        <dbReference type="UniProtKB" id="Q8J0P4"/>
    </source>
</evidence>
<evidence type="ECO:0000255" key="4"/>
<evidence type="ECO:0000255" key="5">
    <source>
        <dbReference type="PROSITE-ProRule" id="PRU00498"/>
    </source>
</evidence>
<evidence type="ECO:0000255" key="6">
    <source>
        <dbReference type="PROSITE-ProRule" id="PRU01098"/>
    </source>
</evidence>
<evidence type="ECO:0000305" key="7"/>
<comment type="function">
    <text evidence="2 3">Dual chitinase/transglycosylase that plays a role in cell wall architecture (By similarity). Chitinase and transglycosylase activities are coupled (By similarity). Required for the polysaccharide cross-linking at the septa and the cell wall (By similarity). More specifically, transfers chitin to 1,6-beta-glucan in the cell wall (By similarity). Plays an important role in fungal pathogenesis. Involved in cell wall assembly and regeneration, filamentation, and adherence to host cells (By similarity).</text>
</comment>
<comment type="catalytic activity">
    <reaction evidence="3">
        <text>Random endo-hydrolysis of N-acetyl-beta-D-glucosaminide (1-&gt;4)-beta-linkages in chitin and chitodextrins.</text>
        <dbReference type="EC" id="3.2.1.14"/>
    </reaction>
</comment>
<comment type="subcellular location">
    <subcellularLocation>
        <location evidence="4">Membrane</location>
        <topology evidence="7">Single-pass type I membrane protein</topology>
    </subcellularLocation>
</comment>
<comment type="allergen">
    <text evidence="7">May cause an allergic reaction in human.</text>
</comment>
<comment type="similarity">
    <text evidence="7">Belongs to the glycosyl hydrolase 16 family. CRH1 subfamily.</text>
</comment>
<comment type="sequence caution" evidence="7">
    <conflict type="erroneous gene model prediction">
        <sequence resource="EMBL-CDS" id="EFE30040"/>
    </conflict>
</comment>